<protein>
    <recommendedName>
        <fullName>Alpha carbonic anhydrase 5</fullName>
        <shortName>AtaCA5</shortName>
        <shortName>AtalphaCA5</shortName>
        <ecNumber>4.2.1.1</ecNumber>
    </recommendedName>
    <alternativeName>
        <fullName>Alpha carbonate dehydratase 5</fullName>
    </alternativeName>
</protein>
<keyword id="KW-0150">Chloroplast</keyword>
<keyword id="KW-1015">Disulfide bond</keyword>
<keyword id="KW-0325">Glycoprotein</keyword>
<keyword id="KW-0456">Lyase</keyword>
<keyword id="KW-0479">Metal-binding</keyword>
<keyword id="KW-0934">Plastid</keyword>
<keyword id="KW-1185">Reference proteome</keyword>
<keyword id="KW-0732">Signal</keyword>
<keyword id="KW-0862">Zinc</keyword>
<name>ATCA5_ARATH</name>
<feature type="signal peptide" evidence="2">
    <location>
        <begin position="1"/>
        <end position="22"/>
    </location>
</feature>
<feature type="chain" id="PRO_0000429731" description="Alpha carbonic anhydrase 5">
    <location>
        <begin position="23"/>
        <end position="277"/>
    </location>
</feature>
<feature type="domain" description="Alpha-carbonic anhydrase" evidence="3">
    <location>
        <begin position="33"/>
        <end position="269"/>
    </location>
</feature>
<feature type="active site" description="Proton acceptor" evidence="3">
    <location>
        <position position="99"/>
    </location>
</feature>
<feature type="binding site" evidence="3">
    <location>
        <position position="127"/>
    </location>
    <ligand>
        <name>Zn(2+)</name>
        <dbReference type="ChEBI" id="CHEBI:29105"/>
        <note>catalytic</note>
    </ligand>
</feature>
<feature type="binding site" evidence="3">
    <location>
        <position position="129"/>
    </location>
    <ligand>
        <name>Zn(2+)</name>
        <dbReference type="ChEBI" id="CHEBI:29105"/>
        <note>catalytic</note>
    </ligand>
</feature>
<feature type="binding site" evidence="3">
    <location>
        <position position="146"/>
    </location>
    <ligand>
        <name>Zn(2+)</name>
        <dbReference type="ChEBI" id="CHEBI:29105"/>
        <note>catalytic</note>
    </ligand>
</feature>
<feature type="binding site" evidence="1">
    <location>
        <begin position="215"/>
        <end position="216"/>
    </location>
    <ligand>
        <name>substrate</name>
    </ligand>
</feature>
<feature type="glycosylation site" description="N-linked (GlcNAc...) asparagine" evidence="2">
    <location>
        <position position="91"/>
    </location>
</feature>
<feature type="glycosylation site" description="N-linked (GlcNAc...) asparagine" evidence="2">
    <location>
        <position position="117"/>
    </location>
</feature>
<feature type="disulfide bond" evidence="1">
    <location>
        <begin position="58"/>
        <end position="219"/>
    </location>
</feature>
<organism>
    <name type="scientific">Arabidopsis thaliana</name>
    <name type="common">Mouse-ear cress</name>
    <dbReference type="NCBI Taxonomy" id="3702"/>
    <lineage>
        <taxon>Eukaryota</taxon>
        <taxon>Viridiplantae</taxon>
        <taxon>Streptophyta</taxon>
        <taxon>Embryophyta</taxon>
        <taxon>Tracheophyta</taxon>
        <taxon>Spermatophyta</taxon>
        <taxon>Magnoliopsida</taxon>
        <taxon>eudicotyledons</taxon>
        <taxon>Gunneridae</taxon>
        <taxon>Pentapetalae</taxon>
        <taxon>rosids</taxon>
        <taxon>malvids</taxon>
        <taxon>Brassicales</taxon>
        <taxon>Brassicaceae</taxon>
        <taxon>Camelineae</taxon>
        <taxon>Arabidopsis</taxon>
    </lineage>
</organism>
<proteinExistence type="inferred from homology"/>
<evidence type="ECO:0000250" key="1"/>
<evidence type="ECO:0000255" key="2"/>
<evidence type="ECO:0000255" key="3">
    <source>
        <dbReference type="PROSITE-ProRule" id="PRU01134"/>
    </source>
</evidence>
<evidence type="ECO:0000305" key="4"/>
<dbReference type="EC" id="4.2.1.1"/>
<dbReference type="EMBL" id="AC026875">
    <property type="status" value="NOT_ANNOTATED_CDS"/>
    <property type="molecule type" value="Genomic_DNA"/>
</dbReference>
<dbReference type="EMBL" id="CP002684">
    <property type="protein sequence ID" value="AEE28238.1"/>
    <property type="molecule type" value="Genomic_DNA"/>
</dbReference>
<dbReference type="RefSeq" id="NP_172285.2">
    <property type="nucleotide sequence ID" value="NM_100681.2"/>
</dbReference>
<dbReference type="SMR" id="F4HUC4"/>
<dbReference type="FunCoup" id="F4HUC4">
    <property type="interactions" value="37"/>
</dbReference>
<dbReference type="STRING" id="3702.F4HUC4"/>
<dbReference type="GlyCosmos" id="F4HUC4">
    <property type="glycosylation" value="2 sites, No reported glycans"/>
</dbReference>
<dbReference type="GlyGen" id="F4HUC4">
    <property type="glycosylation" value="2 sites"/>
</dbReference>
<dbReference type="PaxDb" id="3702-AT1G08065.1"/>
<dbReference type="ProteomicsDB" id="246826"/>
<dbReference type="EnsemblPlants" id="AT1G08065.1">
    <property type="protein sequence ID" value="AT1G08065.1"/>
    <property type="gene ID" value="AT1G08065"/>
</dbReference>
<dbReference type="GeneID" id="837324"/>
<dbReference type="Gramene" id="AT1G08065.1">
    <property type="protein sequence ID" value="AT1G08065.1"/>
    <property type="gene ID" value="AT1G08065"/>
</dbReference>
<dbReference type="KEGG" id="ath:AT1G08065"/>
<dbReference type="Araport" id="AT1G08065"/>
<dbReference type="TAIR" id="AT1G08065">
    <property type="gene designation" value="ACA5"/>
</dbReference>
<dbReference type="eggNOG" id="KOG0382">
    <property type="taxonomic scope" value="Eukaryota"/>
</dbReference>
<dbReference type="HOGENOM" id="CLU_039326_0_0_1"/>
<dbReference type="InParanoid" id="F4HUC4"/>
<dbReference type="OMA" id="ANWDDWW"/>
<dbReference type="PhylomeDB" id="F4HUC4"/>
<dbReference type="PRO" id="PR:F4HUC4"/>
<dbReference type="Proteomes" id="UP000006548">
    <property type="component" value="Chromosome 1"/>
</dbReference>
<dbReference type="ExpressionAtlas" id="F4HUC4">
    <property type="expression patterns" value="baseline and differential"/>
</dbReference>
<dbReference type="GO" id="GO:0009570">
    <property type="term" value="C:chloroplast stroma"/>
    <property type="evidence" value="ECO:0007669"/>
    <property type="project" value="UniProtKB-SubCell"/>
</dbReference>
<dbReference type="GO" id="GO:0098572">
    <property type="term" value="C:stromal side of plastid thylakoid membrane"/>
    <property type="evidence" value="ECO:0000314"/>
    <property type="project" value="TAIR"/>
</dbReference>
<dbReference type="GO" id="GO:0004089">
    <property type="term" value="F:carbonate dehydratase activity"/>
    <property type="evidence" value="ECO:0007669"/>
    <property type="project" value="UniProtKB-EC"/>
</dbReference>
<dbReference type="GO" id="GO:0008270">
    <property type="term" value="F:zinc ion binding"/>
    <property type="evidence" value="ECO:0007669"/>
    <property type="project" value="InterPro"/>
</dbReference>
<dbReference type="CDD" id="cd03124">
    <property type="entry name" value="alpha_CA_prokaryotic_like"/>
    <property type="match status" value="1"/>
</dbReference>
<dbReference type="Gene3D" id="3.10.200.10">
    <property type="entry name" value="Alpha carbonic anhydrase"/>
    <property type="match status" value="1"/>
</dbReference>
<dbReference type="InterPro" id="IPR041891">
    <property type="entry name" value="Alpha_CA_prokaryot-like"/>
</dbReference>
<dbReference type="InterPro" id="IPR001148">
    <property type="entry name" value="CA_dom"/>
</dbReference>
<dbReference type="InterPro" id="IPR036398">
    <property type="entry name" value="CA_dom_sf"/>
</dbReference>
<dbReference type="InterPro" id="IPR023561">
    <property type="entry name" value="Carbonic_anhydrase_a-class"/>
</dbReference>
<dbReference type="PANTHER" id="PTHR18952:SF217">
    <property type="entry name" value="ALPHA CARBONIC ANHYDRASE 5-RELATED"/>
    <property type="match status" value="1"/>
</dbReference>
<dbReference type="PANTHER" id="PTHR18952">
    <property type="entry name" value="CARBONIC ANHYDRASE"/>
    <property type="match status" value="1"/>
</dbReference>
<dbReference type="Pfam" id="PF00194">
    <property type="entry name" value="Carb_anhydrase"/>
    <property type="match status" value="1"/>
</dbReference>
<dbReference type="SMART" id="SM01057">
    <property type="entry name" value="Carb_anhydrase"/>
    <property type="match status" value="1"/>
</dbReference>
<dbReference type="SUPFAM" id="SSF51069">
    <property type="entry name" value="Carbonic anhydrase"/>
    <property type="match status" value="1"/>
</dbReference>
<dbReference type="PROSITE" id="PS51144">
    <property type="entry name" value="ALPHA_CA_2"/>
    <property type="match status" value="1"/>
</dbReference>
<gene>
    <name type="primary">ACA5</name>
    <name type="ordered locus">At1g08065</name>
    <name type="ORF">T6D22.30</name>
</gene>
<accession>F4HUC4</accession>
<reference key="1">
    <citation type="journal article" date="2000" name="Nature">
        <title>Sequence and analysis of chromosome 1 of the plant Arabidopsis thaliana.</title>
        <authorList>
            <person name="Theologis A."/>
            <person name="Ecker J.R."/>
            <person name="Palm C.J."/>
            <person name="Federspiel N.A."/>
            <person name="Kaul S."/>
            <person name="White O."/>
            <person name="Alonso J."/>
            <person name="Altafi H."/>
            <person name="Araujo R."/>
            <person name="Bowman C.L."/>
            <person name="Brooks S.Y."/>
            <person name="Buehler E."/>
            <person name="Chan A."/>
            <person name="Chao Q."/>
            <person name="Chen H."/>
            <person name="Cheuk R.F."/>
            <person name="Chin C.W."/>
            <person name="Chung M.K."/>
            <person name="Conn L."/>
            <person name="Conway A.B."/>
            <person name="Conway A.R."/>
            <person name="Creasy T.H."/>
            <person name="Dewar K."/>
            <person name="Dunn P."/>
            <person name="Etgu P."/>
            <person name="Feldblyum T.V."/>
            <person name="Feng J.-D."/>
            <person name="Fong B."/>
            <person name="Fujii C.Y."/>
            <person name="Gill J.E."/>
            <person name="Goldsmith A.D."/>
            <person name="Haas B."/>
            <person name="Hansen N.F."/>
            <person name="Hughes B."/>
            <person name="Huizar L."/>
            <person name="Hunter J.L."/>
            <person name="Jenkins J."/>
            <person name="Johnson-Hopson C."/>
            <person name="Khan S."/>
            <person name="Khaykin E."/>
            <person name="Kim C.J."/>
            <person name="Koo H.L."/>
            <person name="Kremenetskaia I."/>
            <person name="Kurtz D.B."/>
            <person name="Kwan A."/>
            <person name="Lam B."/>
            <person name="Langin-Hooper S."/>
            <person name="Lee A."/>
            <person name="Lee J.M."/>
            <person name="Lenz C.A."/>
            <person name="Li J.H."/>
            <person name="Li Y.-P."/>
            <person name="Lin X."/>
            <person name="Liu S.X."/>
            <person name="Liu Z.A."/>
            <person name="Luros J.S."/>
            <person name="Maiti R."/>
            <person name="Marziali A."/>
            <person name="Militscher J."/>
            <person name="Miranda M."/>
            <person name="Nguyen M."/>
            <person name="Nierman W.C."/>
            <person name="Osborne B.I."/>
            <person name="Pai G."/>
            <person name="Peterson J."/>
            <person name="Pham P.K."/>
            <person name="Rizzo M."/>
            <person name="Rooney T."/>
            <person name="Rowley D."/>
            <person name="Sakano H."/>
            <person name="Salzberg S.L."/>
            <person name="Schwartz J.R."/>
            <person name="Shinn P."/>
            <person name="Southwick A.M."/>
            <person name="Sun H."/>
            <person name="Tallon L.J."/>
            <person name="Tambunga G."/>
            <person name="Toriumi M.J."/>
            <person name="Town C.D."/>
            <person name="Utterback T."/>
            <person name="Van Aken S."/>
            <person name="Vaysberg M."/>
            <person name="Vysotskaia V.S."/>
            <person name="Walker M."/>
            <person name="Wu D."/>
            <person name="Yu G."/>
            <person name="Fraser C.M."/>
            <person name="Venter J.C."/>
            <person name="Davis R.W."/>
        </authorList>
    </citation>
    <scope>NUCLEOTIDE SEQUENCE [LARGE SCALE GENOMIC DNA]</scope>
    <source>
        <strain>cv. Columbia</strain>
    </source>
</reference>
<reference key="2">
    <citation type="journal article" date="2017" name="Plant J.">
        <title>Araport11: a complete reannotation of the Arabidopsis thaliana reference genome.</title>
        <authorList>
            <person name="Cheng C.Y."/>
            <person name="Krishnakumar V."/>
            <person name="Chan A.P."/>
            <person name="Thibaud-Nissen F."/>
            <person name="Schobel S."/>
            <person name="Town C.D."/>
        </authorList>
    </citation>
    <scope>GENOME REANNOTATION</scope>
    <source>
        <strain>cv. Columbia</strain>
    </source>
</reference>
<reference key="3">
    <citation type="journal article" date="2007" name="Plant Cell Environ.">
        <title>Characterization and expression analysis of genes encoding alpha and beta carbonic anhydrases in Arabidopsis.</title>
        <authorList>
            <person name="Fabre N."/>
            <person name="Reiter I.M."/>
            <person name="Becuwe-Linka N."/>
            <person name="Genty B."/>
            <person name="Rumeau D."/>
        </authorList>
    </citation>
    <scope>GENE FAMILY</scope>
    <scope>NOMENCLATURE</scope>
    <source>
        <strain>cv. Columbia</strain>
    </source>
</reference>
<comment type="function">
    <text evidence="1">Reversible hydration of carbon dioxide.</text>
</comment>
<comment type="catalytic activity">
    <reaction>
        <text>hydrogencarbonate + H(+) = CO2 + H2O</text>
        <dbReference type="Rhea" id="RHEA:10748"/>
        <dbReference type="ChEBI" id="CHEBI:15377"/>
        <dbReference type="ChEBI" id="CHEBI:15378"/>
        <dbReference type="ChEBI" id="CHEBI:16526"/>
        <dbReference type="ChEBI" id="CHEBI:17544"/>
        <dbReference type="EC" id="4.2.1.1"/>
    </reaction>
</comment>
<comment type="cofactor">
    <cofactor evidence="1">
        <name>Zn(2+)</name>
        <dbReference type="ChEBI" id="CHEBI:29105"/>
    </cofactor>
</comment>
<comment type="subcellular location">
    <subcellularLocation>
        <location evidence="1">Plastid</location>
        <location evidence="1">Chloroplast stroma</location>
    </subcellularLocation>
    <text evidence="1">Targeted to the chloroplast via a protein-targeting pathway that uses the secretory system.</text>
</comment>
<comment type="PTM">
    <text evidence="1">N-glycosylated.</text>
</comment>
<comment type="similarity">
    <text evidence="4">Belongs to the alpha-class carbonic anhydrase family.</text>
</comment>
<sequence length="277" mass="32164">MKIPSIGYVFFLIFISITIVSSSPDHGEVEDETQFNYEKKGEKGPENWGRLKPEWAMCGKGNMQSPIDLTDKRVLIDHNLGYLRSQYLPSNATIKNRGHDIMMKFEGGNAGLGITINGTEYKLQQIHWHSPSEHTLNGKRFVLEEHMVHQSKDGRNAVVAFFYKLGKPDYFLLTLERYLKRITDTHESQEFVEMVHPRTFGFESKHYYRFIGSLTTPPCSENVIWTISKEMRTVTLKQLIMLRVTVHDQSNSNARPLQRKNERPVALYIPTWHSKLY</sequence>